<gene>
    <name evidence="1" type="primary">pncB</name>
    <name type="ordered locus">XF_1097</name>
</gene>
<organism>
    <name type="scientific">Xylella fastidiosa (strain 9a5c)</name>
    <dbReference type="NCBI Taxonomy" id="160492"/>
    <lineage>
        <taxon>Bacteria</taxon>
        <taxon>Pseudomonadati</taxon>
        <taxon>Pseudomonadota</taxon>
        <taxon>Gammaproteobacteria</taxon>
        <taxon>Lysobacterales</taxon>
        <taxon>Lysobacteraceae</taxon>
        <taxon>Xylella</taxon>
    </lineage>
</organism>
<comment type="function">
    <text evidence="1">Catalyzes the synthesis of beta-nicotinate D-ribonucleotide from nicotinate and 5-phospho-D-ribose 1-phosphate at the expense of ATP.</text>
</comment>
<comment type="catalytic activity">
    <reaction evidence="1">
        <text>nicotinate + 5-phospho-alpha-D-ribose 1-diphosphate + ATP + H2O = nicotinate beta-D-ribonucleotide + ADP + phosphate + diphosphate</text>
        <dbReference type="Rhea" id="RHEA:36163"/>
        <dbReference type="ChEBI" id="CHEBI:15377"/>
        <dbReference type="ChEBI" id="CHEBI:30616"/>
        <dbReference type="ChEBI" id="CHEBI:32544"/>
        <dbReference type="ChEBI" id="CHEBI:33019"/>
        <dbReference type="ChEBI" id="CHEBI:43474"/>
        <dbReference type="ChEBI" id="CHEBI:57502"/>
        <dbReference type="ChEBI" id="CHEBI:58017"/>
        <dbReference type="ChEBI" id="CHEBI:456216"/>
        <dbReference type="EC" id="6.3.4.21"/>
    </reaction>
</comment>
<comment type="pathway">
    <text evidence="1">Cofactor biosynthesis; NAD(+) biosynthesis; nicotinate D-ribonucleotide from nicotinate: step 1/1.</text>
</comment>
<comment type="PTM">
    <text evidence="1">Transiently phosphorylated on a His residue during the reaction cycle. Phosphorylation strongly increases the affinity for substrates and increases the rate of nicotinate D-ribonucleotide production. Dephosphorylation regenerates the low-affinity form of the enzyme, leading to product release.</text>
</comment>
<comment type="similarity">
    <text evidence="1">Belongs to the NAPRTase family.</text>
</comment>
<accession>Q9PED1</accession>
<evidence type="ECO:0000255" key="1">
    <source>
        <dbReference type="HAMAP-Rule" id="MF_00570"/>
    </source>
</evidence>
<sequence length="394" mass="45022">MEFIIKSLLDTDLYKFTMMQAVLHQYPGAQVEYRFKCRTPGVDLARFINEISHEIDGLCALRFSKEELDYLRGLRFMKPDFVDFLGLFHLDRKYLQLRASTQVSGEIELDIRGPWLHTILFEVPLLAIINEVWFRNTSMLNLDVGRARLDAKVRLLKGESGYEECSIADYGTRRRYSRQWHAELLPLLAQGLGSNFVGTSNVYFAKQYGYTPLGTMAHEYLQAFQALGPRLRDSQVAGLEAWAREYRGDLGIALSDVVGLDAFLGDFDLYFCKLFDGMRHDSGDPFKWGERIIMHLESHRIDPRTKVLVFSDGLDMNKVMRLYQHFRGRCRLAFGVGTSLTNDLGPTPLQIVIKMVRCNGQPVAKLSDSPGKSMCDDPAYLHYLRQVFGVSADV</sequence>
<proteinExistence type="inferred from homology"/>
<reference key="1">
    <citation type="journal article" date="2000" name="Nature">
        <title>The genome sequence of the plant pathogen Xylella fastidiosa.</title>
        <authorList>
            <person name="Simpson A.J.G."/>
            <person name="Reinach F.C."/>
            <person name="Arruda P."/>
            <person name="Abreu F.A."/>
            <person name="Acencio M."/>
            <person name="Alvarenga R."/>
            <person name="Alves L.M.C."/>
            <person name="Araya J.E."/>
            <person name="Baia G.S."/>
            <person name="Baptista C.S."/>
            <person name="Barros M.H."/>
            <person name="Bonaccorsi E.D."/>
            <person name="Bordin S."/>
            <person name="Bove J.M."/>
            <person name="Briones M.R.S."/>
            <person name="Bueno M.R.P."/>
            <person name="Camargo A.A."/>
            <person name="Camargo L.E.A."/>
            <person name="Carraro D.M."/>
            <person name="Carrer H."/>
            <person name="Colauto N.B."/>
            <person name="Colombo C."/>
            <person name="Costa F.F."/>
            <person name="Costa M.C.R."/>
            <person name="Costa-Neto C.M."/>
            <person name="Coutinho L.L."/>
            <person name="Cristofani M."/>
            <person name="Dias-Neto E."/>
            <person name="Docena C."/>
            <person name="El-Dorry H."/>
            <person name="Facincani A.P."/>
            <person name="Ferreira A.J.S."/>
            <person name="Ferreira V.C.A."/>
            <person name="Ferro J.A."/>
            <person name="Fraga J.S."/>
            <person name="Franca S.C."/>
            <person name="Franco M.C."/>
            <person name="Frohme M."/>
            <person name="Furlan L.R."/>
            <person name="Garnier M."/>
            <person name="Goldman G.H."/>
            <person name="Goldman M.H.S."/>
            <person name="Gomes S.L."/>
            <person name="Gruber A."/>
            <person name="Ho P.L."/>
            <person name="Hoheisel J.D."/>
            <person name="Junqueira M.L."/>
            <person name="Kemper E.L."/>
            <person name="Kitajima J.P."/>
            <person name="Krieger J.E."/>
            <person name="Kuramae E.E."/>
            <person name="Laigret F."/>
            <person name="Lambais M.R."/>
            <person name="Leite L.C.C."/>
            <person name="Lemos E.G.M."/>
            <person name="Lemos M.V.F."/>
            <person name="Lopes S.A."/>
            <person name="Lopes C.R."/>
            <person name="Machado J.A."/>
            <person name="Machado M.A."/>
            <person name="Madeira A.M.B.N."/>
            <person name="Madeira H.M.F."/>
            <person name="Marino C.L."/>
            <person name="Marques M.V."/>
            <person name="Martins E.A.L."/>
            <person name="Martins E.M.F."/>
            <person name="Matsukuma A.Y."/>
            <person name="Menck C.F.M."/>
            <person name="Miracca E.C."/>
            <person name="Miyaki C.Y."/>
            <person name="Monteiro-Vitorello C.B."/>
            <person name="Moon D.H."/>
            <person name="Nagai M.A."/>
            <person name="Nascimento A.L.T.O."/>
            <person name="Netto L.E.S."/>
            <person name="Nhani A. Jr."/>
            <person name="Nobrega F.G."/>
            <person name="Nunes L.R."/>
            <person name="Oliveira M.A."/>
            <person name="de Oliveira M.C."/>
            <person name="de Oliveira R.C."/>
            <person name="Palmieri D.A."/>
            <person name="Paris A."/>
            <person name="Peixoto B.R."/>
            <person name="Pereira G.A.G."/>
            <person name="Pereira H.A. Jr."/>
            <person name="Pesquero J.B."/>
            <person name="Quaggio R.B."/>
            <person name="Roberto P.G."/>
            <person name="Rodrigues V."/>
            <person name="de Rosa A.J.M."/>
            <person name="de Rosa V.E. Jr."/>
            <person name="de Sa R.G."/>
            <person name="Santelli R.V."/>
            <person name="Sawasaki H.E."/>
            <person name="da Silva A.C.R."/>
            <person name="da Silva A.M."/>
            <person name="da Silva F.R."/>
            <person name="Silva W.A. Jr."/>
            <person name="da Silveira J.F."/>
            <person name="Silvestri M.L.Z."/>
            <person name="Siqueira W.J."/>
            <person name="de Souza A.A."/>
            <person name="de Souza A.P."/>
            <person name="Terenzi M.F."/>
            <person name="Truffi D."/>
            <person name="Tsai S.M."/>
            <person name="Tsuhako M.H."/>
            <person name="Vallada H."/>
            <person name="Van Sluys M.A."/>
            <person name="Verjovski-Almeida S."/>
            <person name="Vettore A.L."/>
            <person name="Zago M.A."/>
            <person name="Zatz M."/>
            <person name="Meidanis J."/>
            <person name="Setubal J.C."/>
        </authorList>
    </citation>
    <scope>NUCLEOTIDE SEQUENCE [LARGE SCALE GENOMIC DNA]</scope>
    <source>
        <strain>9a5c</strain>
    </source>
</reference>
<dbReference type="EC" id="6.3.4.21" evidence="1"/>
<dbReference type="EMBL" id="AE003849">
    <property type="protein sequence ID" value="AAF83907.1"/>
    <property type="molecule type" value="Genomic_DNA"/>
</dbReference>
<dbReference type="PIR" id="D82725">
    <property type="entry name" value="D82725"/>
</dbReference>
<dbReference type="RefSeq" id="WP_010893614.1">
    <property type="nucleotide sequence ID" value="NC_002488.3"/>
</dbReference>
<dbReference type="SMR" id="Q9PED1"/>
<dbReference type="STRING" id="160492.XF_1097"/>
<dbReference type="KEGG" id="xfa:XF_1097"/>
<dbReference type="eggNOG" id="COG1488">
    <property type="taxonomic scope" value="Bacteria"/>
</dbReference>
<dbReference type="HOGENOM" id="CLU_030991_1_0_6"/>
<dbReference type="UniPathway" id="UPA00253">
    <property type="reaction ID" value="UER00457"/>
</dbReference>
<dbReference type="Proteomes" id="UP000000812">
    <property type="component" value="Chromosome"/>
</dbReference>
<dbReference type="GO" id="GO:0005829">
    <property type="term" value="C:cytosol"/>
    <property type="evidence" value="ECO:0007669"/>
    <property type="project" value="TreeGrafter"/>
</dbReference>
<dbReference type="GO" id="GO:0004516">
    <property type="term" value="F:nicotinate phosphoribosyltransferase activity"/>
    <property type="evidence" value="ECO:0007669"/>
    <property type="project" value="UniProtKB-UniRule"/>
</dbReference>
<dbReference type="GO" id="GO:0034355">
    <property type="term" value="P:NAD biosynthetic process via the salvage pathway"/>
    <property type="evidence" value="ECO:0007669"/>
    <property type="project" value="TreeGrafter"/>
</dbReference>
<dbReference type="CDD" id="cd01401">
    <property type="entry name" value="PncB_like"/>
    <property type="match status" value="1"/>
</dbReference>
<dbReference type="Gene3D" id="3.20.140.10">
    <property type="entry name" value="nicotinate phosphoribosyltransferase"/>
    <property type="match status" value="1"/>
</dbReference>
<dbReference type="HAMAP" id="MF_00570">
    <property type="entry name" value="NAPRTase"/>
    <property type="match status" value="1"/>
</dbReference>
<dbReference type="InterPro" id="IPR041525">
    <property type="entry name" value="N/Namide_PRibTrfase"/>
</dbReference>
<dbReference type="InterPro" id="IPR040727">
    <property type="entry name" value="NAPRTase_N"/>
</dbReference>
<dbReference type="InterPro" id="IPR006406">
    <property type="entry name" value="Nic_PRibTrfase"/>
</dbReference>
<dbReference type="InterPro" id="IPR007229">
    <property type="entry name" value="Nic_PRibTrfase-Fam"/>
</dbReference>
<dbReference type="InterPro" id="IPR036068">
    <property type="entry name" value="Nicotinate_pribotase-like_C"/>
</dbReference>
<dbReference type="NCBIfam" id="TIGR01514">
    <property type="entry name" value="NAPRTase"/>
    <property type="match status" value="1"/>
</dbReference>
<dbReference type="NCBIfam" id="NF003704">
    <property type="entry name" value="PRK05321.1"/>
    <property type="match status" value="1"/>
</dbReference>
<dbReference type="PANTHER" id="PTHR11098">
    <property type="entry name" value="NICOTINATE PHOSPHORIBOSYLTRANSFERASE"/>
    <property type="match status" value="1"/>
</dbReference>
<dbReference type="PANTHER" id="PTHR11098:SF1">
    <property type="entry name" value="NICOTINATE PHOSPHORIBOSYLTRANSFERASE"/>
    <property type="match status" value="1"/>
</dbReference>
<dbReference type="Pfam" id="PF04095">
    <property type="entry name" value="NAPRTase"/>
    <property type="match status" value="1"/>
</dbReference>
<dbReference type="Pfam" id="PF17767">
    <property type="entry name" value="NAPRTase_N"/>
    <property type="match status" value="1"/>
</dbReference>
<dbReference type="PIRSF" id="PIRSF000484">
    <property type="entry name" value="NAPRT"/>
    <property type="match status" value="1"/>
</dbReference>
<dbReference type="SUPFAM" id="SSF51690">
    <property type="entry name" value="Nicotinate/Quinolinate PRTase C-terminal domain-like"/>
    <property type="match status" value="1"/>
</dbReference>
<dbReference type="SUPFAM" id="SSF54675">
    <property type="entry name" value="Nicotinate/Quinolinate PRTase N-terminal domain-like"/>
    <property type="match status" value="1"/>
</dbReference>
<name>PNCB_XYLFA</name>
<keyword id="KW-0436">Ligase</keyword>
<keyword id="KW-0597">Phosphoprotein</keyword>
<keyword id="KW-0662">Pyridine nucleotide biosynthesis</keyword>
<feature type="chain" id="PRO_0000205853" description="Nicotinate phosphoribosyltransferase">
    <location>
        <begin position="1"/>
        <end position="394"/>
    </location>
</feature>
<feature type="modified residue" description="Phosphohistidine; by autocatalysis" evidence="1">
    <location>
        <position position="218"/>
    </location>
</feature>
<protein>
    <recommendedName>
        <fullName evidence="1">Nicotinate phosphoribosyltransferase</fullName>
        <shortName evidence="1">NAPRTase</shortName>
        <ecNumber evidence="1">6.3.4.21</ecNumber>
    </recommendedName>
</protein>